<reference key="1">
    <citation type="journal article" date="2008" name="DNA Res.">
        <title>Complete genome sequence and comparative analysis of the wild-type commensal Escherichia coli strain SE11 isolated from a healthy adult.</title>
        <authorList>
            <person name="Oshima K."/>
            <person name="Toh H."/>
            <person name="Ogura Y."/>
            <person name="Sasamoto H."/>
            <person name="Morita H."/>
            <person name="Park S.-H."/>
            <person name="Ooka T."/>
            <person name="Iyoda S."/>
            <person name="Taylor T.D."/>
            <person name="Hayashi T."/>
            <person name="Itoh K."/>
            <person name="Hattori M."/>
        </authorList>
    </citation>
    <scope>NUCLEOTIDE SEQUENCE [LARGE SCALE GENOMIC DNA]</scope>
    <source>
        <strain>SE11</strain>
    </source>
</reference>
<dbReference type="EMBL" id="AP009240">
    <property type="protein sequence ID" value="BAG78975.1"/>
    <property type="molecule type" value="Genomic_DNA"/>
</dbReference>
<dbReference type="RefSeq" id="WP_000059466.1">
    <property type="nucleotide sequence ID" value="NC_011415.1"/>
</dbReference>
<dbReference type="SMR" id="B6I1P0"/>
<dbReference type="GeneID" id="93778818"/>
<dbReference type="KEGG" id="ecy:ECSE_3451"/>
<dbReference type="HOGENOM" id="CLU_148518_0_0_6"/>
<dbReference type="Proteomes" id="UP000008199">
    <property type="component" value="Chromosome"/>
</dbReference>
<dbReference type="GO" id="GO:0022627">
    <property type="term" value="C:cytosolic small ribosomal subunit"/>
    <property type="evidence" value="ECO:0007669"/>
    <property type="project" value="TreeGrafter"/>
</dbReference>
<dbReference type="GO" id="GO:0019843">
    <property type="term" value="F:rRNA binding"/>
    <property type="evidence" value="ECO:0007669"/>
    <property type="project" value="UniProtKB-UniRule"/>
</dbReference>
<dbReference type="GO" id="GO:0003735">
    <property type="term" value="F:structural constituent of ribosome"/>
    <property type="evidence" value="ECO:0007669"/>
    <property type="project" value="InterPro"/>
</dbReference>
<dbReference type="GO" id="GO:0006412">
    <property type="term" value="P:translation"/>
    <property type="evidence" value="ECO:0007669"/>
    <property type="project" value="UniProtKB-UniRule"/>
</dbReference>
<dbReference type="CDD" id="cd00353">
    <property type="entry name" value="Ribosomal_S15p_S13e"/>
    <property type="match status" value="1"/>
</dbReference>
<dbReference type="FunFam" id="1.10.287.10:FF:000002">
    <property type="entry name" value="30S ribosomal protein S15"/>
    <property type="match status" value="1"/>
</dbReference>
<dbReference type="Gene3D" id="6.10.250.3130">
    <property type="match status" value="1"/>
</dbReference>
<dbReference type="Gene3D" id="1.10.287.10">
    <property type="entry name" value="S15/NS1, RNA-binding"/>
    <property type="match status" value="1"/>
</dbReference>
<dbReference type="HAMAP" id="MF_01343_B">
    <property type="entry name" value="Ribosomal_uS15_B"/>
    <property type="match status" value="1"/>
</dbReference>
<dbReference type="InterPro" id="IPR000589">
    <property type="entry name" value="Ribosomal_uS15"/>
</dbReference>
<dbReference type="InterPro" id="IPR005290">
    <property type="entry name" value="Ribosomal_uS15_bac-type"/>
</dbReference>
<dbReference type="InterPro" id="IPR009068">
    <property type="entry name" value="uS15_NS1_RNA-bd_sf"/>
</dbReference>
<dbReference type="NCBIfam" id="TIGR00952">
    <property type="entry name" value="S15_bact"/>
    <property type="match status" value="1"/>
</dbReference>
<dbReference type="PANTHER" id="PTHR23321">
    <property type="entry name" value="RIBOSOMAL PROTEIN S15, BACTERIAL AND ORGANELLAR"/>
    <property type="match status" value="1"/>
</dbReference>
<dbReference type="PANTHER" id="PTHR23321:SF26">
    <property type="entry name" value="SMALL RIBOSOMAL SUBUNIT PROTEIN US15M"/>
    <property type="match status" value="1"/>
</dbReference>
<dbReference type="Pfam" id="PF00312">
    <property type="entry name" value="Ribosomal_S15"/>
    <property type="match status" value="1"/>
</dbReference>
<dbReference type="SMART" id="SM01387">
    <property type="entry name" value="Ribosomal_S15"/>
    <property type="match status" value="1"/>
</dbReference>
<dbReference type="SUPFAM" id="SSF47060">
    <property type="entry name" value="S15/NS1 RNA-binding domain"/>
    <property type="match status" value="1"/>
</dbReference>
<dbReference type="PROSITE" id="PS00362">
    <property type="entry name" value="RIBOSOMAL_S15"/>
    <property type="match status" value="1"/>
</dbReference>
<gene>
    <name evidence="1" type="primary">rpsO</name>
    <name type="ordered locus">ECSE_3451</name>
</gene>
<comment type="function">
    <text evidence="1">One of the primary rRNA binding proteins, it binds directly to 16S rRNA where it helps nucleate assembly of the platform of the 30S subunit by binding and bridging several RNA helices of the 16S rRNA.</text>
</comment>
<comment type="function">
    <text evidence="1">Forms an intersubunit bridge (bridge B4) with the 23S rRNA of the 50S subunit in the ribosome.</text>
</comment>
<comment type="subunit">
    <text evidence="1">Part of the 30S ribosomal subunit. Forms a bridge to the 50S subunit in the 70S ribosome, contacting the 23S rRNA.</text>
</comment>
<comment type="similarity">
    <text evidence="1">Belongs to the universal ribosomal protein uS15 family.</text>
</comment>
<keyword id="KW-0687">Ribonucleoprotein</keyword>
<keyword id="KW-0689">Ribosomal protein</keyword>
<keyword id="KW-0694">RNA-binding</keyword>
<keyword id="KW-0699">rRNA-binding</keyword>
<organism>
    <name type="scientific">Escherichia coli (strain SE11)</name>
    <dbReference type="NCBI Taxonomy" id="409438"/>
    <lineage>
        <taxon>Bacteria</taxon>
        <taxon>Pseudomonadati</taxon>
        <taxon>Pseudomonadota</taxon>
        <taxon>Gammaproteobacteria</taxon>
        <taxon>Enterobacterales</taxon>
        <taxon>Enterobacteriaceae</taxon>
        <taxon>Escherichia</taxon>
    </lineage>
</organism>
<protein>
    <recommendedName>
        <fullName evidence="1">Small ribosomal subunit protein uS15</fullName>
    </recommendedName>
    <alternativeName>
        <fullName evidence="2">30S ribosomal protein S15</fullName>
    </alternativeName>
</protein>
<accession>B6I1P0</accession>
<feature type="chain" id="PRO_1000143114" description="Small ribosomal subunit protein uS15">
    <location>
        <begin position="1"/>
        <end position="89"/>
    </location>
</feature>
<proteinExistence type="inferred from homology"/>
<evidence type="ECO:0000255" key="1">
    <source>
        <dbReference type="HAMAP-Rule" id="MF_01343"/>
    </source>
</evidence>
<evidence type="ECO:0000305" key="2"/>
<name>RS15_ECOSE</name>
<sequence length="89" mass="10269">MSLSTEATAKIVSEFGRDANDTGSTEVQVALLTAQINHLQGHFAEHKKDHHSRRGLLRMVSQRRKLLDYLKRKDVARYTQLIERLGLRR</sequence>